<sequence length="304" mass="34755">MNIVFSRDSQVRVMENTVANTEKYFGQFCSLLAAYTRKTARLRDKADQLVKQLIDFANSENPELRATMRGFAEDLAKVQDYRQAQVERLETKVVNPLKLYGAQIKQTRAEIKKFKHVQNHEIKQLEKLEKLRQKSPSDQQMIGQAETRVQRAAVDSSRTTLQLEETVDGFQRQKLKDLQKFFCDFVTIEMVFHAKAVEVYSSAFQTLEKYDLERDLLDFRAKMQGVYGHYDTRLLANTSPPPSVLQSLASQGTLQVQLSRANEDPEHPHANHGRFSLCEWVVKGQPAHCVCGQGGHLMLPGHSL</sequence>
<keyword id="KW-0966">Cell projection</keyword>
<keyword id="KW-0970">Cilium biogenesis/degradation</keyword>
<keyword id="KW-0963">Cytoplasm</keyword>
<keyword id="KW-0206">Cytoskeleton</keyword>
<keyword id="KW-1267">Proteomics identification</keyword>
<keyword id="KW-1185">Reference proteome</keyword>
<dbReference type="EMBL" id="AK126284">
    <property type="protein sequence ID" value="BAC86515.1"/>
    <property type="molecule type" value="mRNA"/>
</dbReference>
<dbReference type="EMBL" id="AC026469">
    <property type="status" value="NOT_ANNOTATED_CDS"/>
    <property type="molecule type" value="Genomic_DNA"/>
</dbReference>
<dbReference type="EMBL" id="BC093665">
    <property type="protein sequence ID" value="AAH93665.1"/>
    <property type="molecule type" value="mRNA"/>
</dbReference>
<dbReference type="EMBL" id="BC111944">
    <property type="protein sequence ID" value="AAI11945.1"/>
    <property type="molecule type" value="mRNA"/>
</dbReference>
<dbReference type="CCDS" id="CCDS32500.1"/>
<dbReference type="RefSeq" id="NP_940893.1">
    <property type="nucleotide sequence ID" value="NM_198491.2"/>
</dbReference>
<dbReference type="RefSeq" id="XP_011521365.1">
    <property type="nucleotide sequence ID" value="XM_011523063.1"/>
</dbReference>
<dbReference type="SMR" id="Q6ZTR7"/>
<dbReference type="BioGRID" id="130832">
    <property type="interactions" value="6"/>
</dbReference>
<dbReference type="FunCoup" id="Q6ZTR7">
    <property type="interactions" value="58"/>
</dbReference>
<dbReference type="IntAct" id="Q6ZTR7">
    <property type="interactions" value="4"/>
</dbReference>
<dbReference type="MINT" id="Q6ZTR7"/>
<dbReference type="STRING" id="9606.ENSP00000443411"/>
<dbReference type="GlyGen" id="Q6ZTR7">
    <property type="glycosylation" value="1 site, 1 O-linked glycan (1 site)"/>
</dbReference>
<dbReference type="iPTMnet" id="Q6ZTR7"/>
<dbReference type="PhosphoSitePlus" id="Q6ZTR7"/>
<dbReference type="BioMuta" id="FAM92B"/>
<dbReference type="DMDM" id="74738328"/>
<dbReference type="jPOST" id="Q6ZTR7"/>
<dbReference type="MassIVE" id="Q6ZTR7"/>
<dbReference type="PaxDb" id="9606-ENSP00000443411"/>
<dbReference type="PeptideAtlas" id="Q6ZTR7"/>
<dbReference type="ProteomicsDB" id="68290"/>
<dbReference type="Antibodypedia" id="44888">
    <property type="antibodies" value="28 antibodies from 12 providers"/>
</dbReference>
<dbReference type="DNASU" id="339145"/>
<dbReference type="GeneID" id="339145"/>
<dbReference type="KEGG" id="hsa:339145"/>
<dbReference type="UCSC" id="uc059xyr.1">
    <property type="organism name" value="human"/>
</dbReference>
<dbReference type="AGR" id="HGNC:24781"/>
<dbReference type="CTD" id="339145"/>
<dbReference type="DisGeNET" id="339145"/>
<dbReference type="GeneCards" id="CIBAR2"/>
<dbReference type="HGNC" id="HGNC:24781">
    <property type="gene designation" value="CIBAR2"/>
</dbReference>
<dbReference type="HPA" id="ENSG00000153789">
    <property type="expression patterns" value="Tissue enhanced (choroid plexus, fallopian tube)"/>
</dbReference>
<dbReference type="MIM" id="617274">
    <property type="type" value="gene"/>
</dbReference>
<dbReference type="neXtProt" id="NX_Q6ZTR7"/>
<dbReference type="PharmGKB" id="PA142671826"/>
<dbReference type="VEuPathDB" id="HostDB:ENSG00000153789"/>
<dbReference type="eggNOG" id="ENOG502QT9N">
    <property type="taxonomic scope" value="Eukaryota"/>
</dbReference>
<dbReference type="HOGENOM" id="CLU_072172_2_0_1"/>
<dbReference type="InParanoid" id="Q6ZTR7"/>
<dbReference type="OrthoDB" id="60621at2759"/>
<dbReference type="PAN-GO" id="Q6ZTR7">
    <property type="GO annotations" value="3 GO annotations based on evolutionary models"/>
</dbReference>
<dbReference type="PhylomeDB" id="Q6ZTR7"/>
<dbReference type="TreeFam" id="TF324316"/>
<dbReference type="PathwayCommons" id="Q6ZTR7"/>
<dbReference type="SignaLink" id="Q6ZTR7"/>
<dbReference type="BioGRID-ORCS" id="339145">
    <property type="hits" value="17 hits in 1068 CRISPR screens"/>
</dbReference>
<dbReference type="GenomeRNAi" id="339145"/>
<dbReference type="Pharos" id="Q6ZTR7">
    <property type="development level" value="Tdark"/>
</dbReference>
<dbReference type="PRO" id="PR:Q6ZTR7"/>
<dbReference type="Proteomes" id="UP000005640">
    <property type="component" value="Chromosome 16"/>
</dbReference>
<dbReference type="RNAct" id="Q6ZTR7">
    <property type="molecule type" value="protein"/>
</dbReference>
<dbReference type="Bgee" id="ENSG00000153789">
    <property type="expression patterns" value="Expressed in right uterine tube and 81 other cell types or tissues"/>
</dbReference>
<dbReference type="ExpressionAtlas" id="Q6ZTR7">
    <property type="expression patterns" value="baseline and differential"/>
</dbReference>
<dbReference type="GO" id="GO:0005814">
    <property type="term" value="C:centriole"/>
    <property type="evidence" value="ECO:0007669"/>
    <property type="project" value="UniProtKB-SubCell"/>
</dbReference>
<dbReference type="GO" id="GO:0036064">
    <property type="term" value="C:ciliary basal body"/>
    <property type="evidence" value="ECO:0000318"/>
    <property type="project" value="GO_Central"/>
</dbReference>
<dbReference type="GO" id="GO:0035869">
    <property type="term" value="C:ciliary transition zone"/>
    <property type="evidence" value="ECO:0000318"/>
    <property type="project" value="GO_Central"/>
</dbReference>
<dbReference type="GO" id="GO:0005737">
    <property type="term" value="C:cytoplasm"/>
    <property type="evidence" value="ECO:0007669"/>
    <property type="project" value="UniProtKB-KW"/>
</dbReference>
<dbReference type="GO" id="GO:0060271">
    <property type="term" value="P:cilium assembly"/>
    <property type="evidence" value="ECO:0000318"/>
    <property type="project" value="GO_Central"/>
</dbReference>
<dbReference type="CDD" id="cd07598">
    <property type="entry name" value="BAR_FAM92"/>
    <property type="match status" value="1"/>
</dbReference>
<dbReference type="Gene3D" id="1.20.1270.60">
    <property type="entry name" value="Arfaptin homology (AH) domain/BAR domain"/>
    <property type="match status" value="1"/>
</dbReference>
<dbReference type="InterPro" id="IPR027267">
    <property type="entry name" value="AH/BAR_dom_sf"/>
</dbReference>
<dbReference type="InterPro" id="IPR035590">
    <property type="entry name" value="BAR_CBAR1/2"/>
</dbReference>
<dbReference type="InterPro" id="IPR009602">
    <property type="entry name" value="CBAR/FAM92"/>
</dbReference>
<dbReference type="PANTHER" id="PTHR21223:SF3">
    <property type="entry name" value="CBY1-INTERACTING BAR DOMAIN-CONTAINING PROTEIN 2"/>
    <property type="match status" value="1"/>
</dbReference>
<dbReference type="PANTHER" id="PTHR21223">
    <property type="entry name" value="CBY1-INTERACTING BAR DOMAIN-CONTAINING PROTEIN HOMOLOG"/>
    <property type="match status" value="1"/>
</dbReference>
<dbReference type="Pfam" id="PF06730">
    <property type="entry name" value="FAM92"/>
    <property type="match status" value="1"/>
</dbReference>
<dbReference type="SUPFAM" id="SSF103657">
    <property type="entry name" value="BAR/IMD domain-like"/>
    <property type="match status" value="1"/>
</dbReference>
<feature type="chain" id="PRO_0000333004" description="CBY1-interacting BAR domain-containing protein 2">
    <location>
        <begin position="1"/>
        <end position="304"/>
    </location>
</feature>
<feature type="region of interest" description="BAR-like" evidence="1">
    <location>
        <begin position="6"/>
        <end position="217"/>
    </location>
</feature>
<feature type="sequence variant" id="VAR_043035" description="In dbSNP:rs9934891.">
    <original>E</original>
    <variation>K</variation>
    <location>
        <position position="22"/>
    </location>
</feature>
<feature type="mutagenesis site" description="Abolishes ability to induce membrane remodeling in the presence of CBY1; when associated with E-108; E-112; E-130; E-132 and E-134." evidence="3">
    <original>K</original>
    <variation>E</variation>
    <location>
        <position position="105"/>
    </location>
</feature>
<feature type="mutagenesis site" description="Abolishes ability to induce membrane remodeling in the presence of CBY1; when associated with E-105; E-112; E-130; E-132 and E-134." evidence="3">
    <original>R</original>
    <variation>E</variation>
    <location>
        <position position="108"/>
    </location>
</feature>
<feature type="mutagenesis site" description="Abolishes ability to induce membrane remodeling in the presence of CBY1; when associated with E-105; E-108; E-130; E-132 and E-134." evidence="3">
    <original>K</original>
    <variation>E</variation>
    <location>
        <position position="112"/>
    </location>
</feature>
<feature type="mutagenesis site" description="Abolishes ability to induce membrane remodeling in the presence of CBY1; when associated with E-105; E-108; E-112; E-132 and E-134." evidence="3">
    <original>K</original>
    <variation>E</variation>
    <location>
        <position position="130"/>
    </location>
</feature>
<feature type="mutagenesis site" description="Abolishes ability to induce membrane remodeling in the presence of CBY1; when associated with E-105; E-108; E-112; E-130 and E-134." evidence="3">
    <original>R</original>
    <variation>E</variation>
    <location>
        <position position="132"/>
    </location>
</feature>
<feature type="mutagenesis site" description="Abolishes ability to induce membrane remodeling in the presence of CBY1; when associated with E-105; E-108; E-1112; E-130 and E-132." evidence="3">
    <original>K</original>
    <variation>E</variation>
    <location>
        <position position="134"/>
    </location>
</feature>
<feature type="sequence conflict" description="In Ref. 1; BAC86515 and 3; AAH93665/AAI11945." ref="1 3">
    <original>G</original>
    <variation>S</variation>
    <location>
        <position position="143"/>
    </location>
</feature>
<gene>
    <name evidence="5" type="primary">CIBAR2</name>
    <name type="synonym">FAM92B</name>
</gene>
<protein>
    <recommendedName>
        <fullName evidence="5">CBY1-interacting BAR domain-containing protein 2</fullName>
    </recommendedName>
    <alternativeName>
        <fullName>Protein FAM92B</fullName>
    </alternativeName>
</protein>
<comment type="function">
    <text evidence="1 3">May play a role in ciliogenesis (By similarity). In cooperation with CBY1 may facilitate ciliogenesis likely by the recruitment and fusion of endosomal vesicles at distal appendages during early stages of ciliogenesis (PubMed:27528616).</text>
</comment>
<comment type="subunit">
    <text evidence="3">Homodimer (via BAR-like domain) (PubMed:27528616). Heterodimer (via BAR-like domain) with FAM92A (PubMed:27528616). Interacts with CBY1 (PubMed:27528616).</text>
</comment>
<comment type="subcellular location">
    <subcellularLocation>
        <location evidence="2">Cytoplasm</location>
        <location evidence="2">Cytoskeleton</location>
        <location evidence="2">Microtubule organizing center</location>
        <location evidence="2">Centrosome</location>
        <location evidence="2">Centriole</location>
    </subcellularLocation>
    <subcellularLocation>
        <location evidence="2">Cytoplasm</location>
        <location evidence="2">Cytoskeleton</location>
        <location evidence="2">Cilium basal body</location>
    </subcellularLocation>
    <text evidence="2">Extensive colocalization with CBY1 at mother centrioles.</text>
</comment>
<comment type="tissue specificity">
    <text evidence="3">Restricted to certain tissues, most prominently expressed in multicilaited tissues.</text>
</comment>
<comment type="domain">
    <text evidence="1">The BAR-like domain displays limited similarity to other BAR domains.</text>
</comment>
<comment type="similarity">
    <text evidence="4">Belongs to the CIBAR family.</text>
</comment>
<proteinExistence type="evidence at protein level"/>
<evidence type="ECO:0000250" key="1">
    <source>
        <dbReference type="UniProtKB" id="A1XBS5"/>
    </source>
</evidence>
<evidence type="ECO:0000250" key="2">
    <source>
        <dbReference type="UniProtKB" id="Q3V2J0"/>
    </source>
</evidence>
<evidence type="ECO:0000269" key="3">
    <source>
    </source>
</evidence>
<evidence type="ECO:0000305" key="4"/>
<evidence type="ECO:0000312" key="5">
    <source>
        <dbReference type="HGNC" id="HGNC:24781"/>
    </source>
</evidence>
<reference key="1">
    <citation type="journal article" date="2004" name="Nat. Genet.">
        <title>Complete sequencing and characterization of 21,243 full-length human cDNAs.</title>
        <authorList>
            <person name="Ota T."/>
            <person name="Suzuki Y."/>
            <person name="Nishikawa T."/>
            <person name="Otsuki T."/>
            <person name="Sugiyama T."/>
            <person name="Irie R."/>
            <person name="Wakamatsu A."/>
            <person name="Hayashi K."/>
            <person name="Sato H."/>
            <person name="Nagai K."/>
            <person name="Kimura K."/>
            <person name="Makita H."/>
            <person name="Sekine M."/>
            <person name="Obayashi M."/>
            <person name="Nishi T."/>
            <person name="Shibahara T."/>
            <person name="Tanaka T."/>
            <person name="Ishii S."/>
            <person name="Yamamoto J."/>
            <person name="Saito K."/>
            <person name="Kawai Y."/>
            <person name="Isono Y."/>
            <person name="Nakamura Y."/>
            <person name="Nagahari K."/>
            <person name="Murakami K."/>
            <person name="Yasuda T."/>
            <person name="Iwayanagi T."/>
            <person name="Wagatsuma M."/>
            <person name="Shiratori A."/>
            <person name="Sudo H."/>
            <person name="Hosoiri T."/>
            <person name="Kaku Y."/>
            <person name="Kodaira H."/>
            <person name="Kondo H."/>
            <person name="Sugawara M."/>
            <person name="Takahashi M."/>
            <person name="Kanda K."/>
            <person name="Yokoi T."/>
            <person name="Furuya T."/>
            <person name="Kikkawa E."/>
            <person name="Omura Y."/>
            <person name="Abe K."/>
            <person name="Kamihara K."/>
            <person name="Katsuta N."/>
            <person name="Sato K."/>
            <person name="Tanikawa M."/>
            <person name="Yamazaki M."/>
            <person name="Ninomiya K."/>
            <person name="Ishibashi T."/>
            <person name="Yamashita H."/>
            <person name="Murakawa K."/>
            <person name="Fujimori K."/>
            <person name="Tanai H."/>
            <person name="Kimata M."/>
            <person name="Watanabe M."/>
            <person name="Hiraoka S."/>
            <person name="Chiba Y."/>
            <person name="Ishida S."/>
            <person name="Ono Y."/>
            <person name="Takiguchi S."/>
            <person name="Watanabe S."/>
            <person name="Yosida M."/>
            <person name="Hotuta T."/>
            <person name="Kusano J."/>
            <person name="Kanehori K."/>
            <person name="Takahashi-Fujii A."/>
            <person name="Hara H."/>
            <person name="Tanase T.-O."/>
            <person name="Nomura Y."/>
            <person name="Togiya S."/>
            <person name="Komai F."/>
            <person name="Hara R."/>
            <person name="Takeuchi K."/>
            <person name="Arita M."/>
            <person name="Imose N."/>
            <person name="Musashino K."/>
            <person name="Yuuki H."/>
            <person name="Oshima A."/>
            <person name="Sasaki N."/>
            <person name="Aotsuka S."/>
            <person name="Yoshikawa Y."/>
            <person name="Matsunawa H."/>
            <person name="Ichihara T."/>
            <person name="Shiohata N."/>
            <person name="Sano S."/>
            <person name="Moriya S."/>
            <person name="Momiyama H."/>
            <person name="Satoh N."/>
            <person name="Takami S."/>
            <person name="Terashima Y."/>
            <person name="Suzuki O."/>
            <person name="Nakagawa S."/>
            <person name="Senoh A."/>
            <person name="Mizoguchi H."/>
            <person name="Goto Y."/>
            <person name="Shimizu F."/>
            <person name="Wakebe H."/>
            <person name="Hishigaki H."/>
            <person name="Watanabe T."/>
            <person name="Sugiyama A."/>
            <person name="Takemoto M."/>
            <person name="Kawakami B."/>
            <person name="Yamazaki M."/>
            <person name="Watanabe K."/>
            <person name="Kumagai A."/>
            <person name="Itakura S."/>
            <person name="Fukuzumi Y."/>
            <person name="Fujimori Y."/>
            <person name="Komiyama M."/>
            <person name="Tashiro H."/>
            <person name="Tanigami A."/>
            <person name="Fujiwara T."/>
            <person name="Ono T."/>
            <person name="Yamada K."/>
            <person name="Fujii Y."/>
            <person name="Ozaki K."/>
            <person name="Hirao M."/>
            <person name="Ohmori Y."/>
            <person name="Kawabata A."/>
            <person name="Hikiji T."/>
            <person name="Kobatake N."/>
            <person name="Inagaki H."/>
            <person name="Ikema Y."/>
            <person name="Okamoto S."/>
            <person name="Okitani R."/>
            <person name="Kawakami T."/>
            <person name="Noguchi S."/>
            <person name="Itoh T."/>
            <person name="Shigeta K."/>
            <person name="Senba T."/>
            <person name="Matsumura K."/>
            <person name="Nakajima Y."/>
            <person name="Mizuno T."/>
            <person name="Morinaga M."/>
            <person name="Sasaki M."/>
            <person name="Togashi T."/>
            <person name="Oyama M."/>
            <person name="Hata H."/>
            <person name="Watanabe M."/>
            <person name="Komatsu T."/>
            <person name="Mizushima-Sugano J."/>
            <person name="Satoh T."/>
            <person name="Shirai Y."/>
            <person name="Takahashi Y."/>
            <person name="Nakagawa K."/>
            <person name="Okumura K."/>
            <person name="Nagase T."/>
            <person name="Nomura N."/>
            <person name="Kikuchi H."/>
            <person name="Masuho Y."/>
            <person name="Yamashita R."/>
            <person name="Nakai K."/>
            <person name="Yada T."/>
            <person name="Nakamura Y."/>
            <person name="Ohara O."/>
            <person name="Isogai T."/>
            <person name="Sugano S."/>
        </authorList>
    </citation>
    <scope>NUCLEOTIDE SEQUENCE [LARGE SCALE MRNA]</scope>
    <source>
        <tissue>Trachea</tissue>
    </source>
</reference>
<reference key="2">
    <citation type="journal article" date="2004" name="Nature">
        <title>The sequence and analysis of duplication-rich human chromosome 16.</title>
        <authorList>
            <person name="Martin J."/>
            <person name="Han C."/>
            <person name="Gordon L.A."/>
            <person name="Terry A."/>
            <person name="Prabhakar S."/>
            <person name="She X."/>
            <person name="Xie G."/>
            <person name="Hellsten U."/>
            <person name="Chan Y.M."/>
            <person name="Altherr M."/>
            <person name="Couronne O."/>
            <person name="Aerts A."/>
            <person name="Bajorek E."/>
            <person name="Black S."/>
            <person name="Blumer H."/>
            <person name="Branscomb E."/>
            <person name="Brown N.C."/>
            <person name="Bruno W.J."/>
            <person name="Buckingham J.M."/>
            <person name="Callen D.F."/>
            <person name="Campbell C.S."/>
            <person name="Campbell M.L."/>
            <person name="Campbell E.W."/>
            <person name="Caoile C."/>
            <person name="Challacombe J.F."/>
            <person name="Chasteen L.A."/>
            <person name="Chertkov O."/>
            <person name="Chi H.C."/>
            <person name="Christensen M."/>
            <person name="Clark L.M."/>
            <person name="Cohn J.D."/>
            <person name="Denys M."/>
            <person name="Detter J.C."/>
            <person name="Dickson M."/>
            <person name="Dimitrijevic-Bussod M."/>
            <person name="Escobar J."/>
            <person name="Fawcett J.J."/>
            <person name="Flowers D."/>
            <person name="Fotopulos D."/>
            <person name="Glavina T."/>
            <person name="Gomez M."/>
            <person name="Gonzales E."/>
            <person name="Goodstein D."/>
            <person name="Goodwin L.A."/>
            <person name="Grady D.L."/>
            <person name="Grigoriev I."/>
            <person name="Groza M."/>
            <person name="Hammon N."/>
            <person name="Hawkins T."/>
            <person name="Haydu L."/>
            <person name="Hildebrand C.E."/>
            <person name="Huang W."/>
            <person name="Israni S."/>
            <person name="Jett J."/>
            <person name="Jewett P.B."/>
            <person name="Kadner K."/>
            <person name="Kimball H."/>
            <person name="Kobayashi A."/>
            <person name="Krawczyk M.-C."/>
            <person name="Leyba T."/>
            <person name="Longmire J.L."/>
            <person name="Lopez F."/>
            <person name="Lou Y."/>
            <person name="Lowry S."/>
            <person name="Ludeman T."/>
            <person name="Manohar C.F."/>
            <person name="Mark G.A."/>
            <person name="McMurray K.L."/>
            <person name="Meincke L.J."/>
            <person name="Morgan J."/>
            <person name="Moyzis R.K."/>
            <person name="Mundt M.O."/>
            <person name="Munk A.C."/>
            <person name="Nandkeshwar R.D."/>
            <person name="Pitluck S."/>
            <person name="Pollard M."/>
            <person name="Predki P."/>
            <person name="Parson-Quintana B."/>
            <person name="Ramirez L."/>
            <person name="Rash S."/>
            <person name="Retterer J."/>
            <person name="Ricke D.O."/>
            <person name="Robinson D.L."/>
            <person name="Rodriguez A."/>
            <person name="Salamov A."/>
            <person name="Saunders E.H."/>
            <person name="Scott D."/>
            <person name="Shough T."/>
            <person name="Stallings R.L."/>
            <person name="Stalvey M."/>
            <person name="Sutherland R.D."/>
            <person name="Tapia R."/>
            <person name="Tesmer J.G."/>
            <person name="Thayer N."/>
            <person name="Thompson L.S."/>
            <person name="Tice H."/>
            <person name="Torney D.C."/>
            <person name="Tran-Gyamfi M."/>
            <person name="Tsai M."/>
            <person name="Ulanovsky L.E."/>
            <person name="Ustaszewska A."/>
            <person name="Vo N."/>
            <person name="White P.S."/>
            <person name="Williams A.L."/>
            <person name="Wills P.L."/>
            <person name="Wu J.-R."/>
            <person name="Wu K."/>
            <person name="Yang J."/>
            <person name="DeJong P."/>
            <person name="Bruce D."/>
            <person name="Doggett N.A."/>
            <person name="Deaven L."/>
            <person name="Schmutz J."/>
            <person name="Grimwood J."/>
            <person name="Richardson P."/>
            <person name="Rokhsar D.S."/>
            <person name="Eichler E.E."/>
            <person name="Gilna P."/>
            <person name="Lucas S.M."/>
            <person name="Myers R.M."/>
            <person name="Rubin E.M."/>
            <person name="Pennacchio L.A."/>
        </authorList>
    </citation>
    <scope>NUCLEOTIDE SEQUENCE [LARGE SCALE GENOMIC DNA]</scope>
</reference>
<reference key="3">
    <citation type="journal article" date="2004" name="Genome Res.">
        <title>The status, quality, and expansion of the NIH full-length cDNA project: the Mammalian Gene Collection (MGC).</title>
        <authorList>
            <consortium name="The MGC Project Team"/>
        </authorList>
    </citation>
    <scope>NUCLEOTIDE SEQUENCE [LARGE SCALE MRNA]</scope>
    <source>
        <tissue>Heart</tissue>
        <tissue>Lung</tissue>
    </source>
</reference>
<reference key="4">
    <citation type="journal article" date="2016" name="Mol. Cell. Biol.">
        <title>BAR domain-containing FAM92 proteins interact with chibby1 to facilitate ciliogenesis.</title>
        <authorList>
            <person name="Li F.Q."/>
            <person name="Chen X."/>
            <person name="Fisher C."/>
            <person name="Siller S.S."/>
            <person name="Zelikman K."/>
            <person name="Kuriyama R."/>
            <person name="Takemaru K.I."/>
        </authorList>
    </citation>
    <scope>INTERACTION WITH CBY1</scope>
    <scope>SUBUNIT</scope>
    <scope>TISSUE SPECIFICITY</scope>
    <scope>MUTAGENESIS OF LYS-105; ARG-108; LYS-112; LYS-130; ARG-132 AND LYS-134</scope>
    <scope>FUNCTION</scope>
</reference>
<name>CBAR2_HUMAN</name>
<organism>
    <name type="scientific">Homo sapiens</name>
    <name type="common">Human</name>
    <dbReference type="NCBI Taxonomy" id="9606"/>
    <lineage>
        <taxon>Eukaryota</taxon>
        <taxon>Metazoa</taxon>
        <taxon>Chordata</taxon>
        <taxon>Craniata</taxon>
        <taxon>Vertebrata</taxon>
        <taxon>Euteleostomi</taxon>
        <taxon>Mammalia</taxon>
        <taxon>Eutheria</taxon>
        <taxon>Euarchontoglires</taxon>
        <taxon>Primates</taxon>
        <taxon>Haplorrhini</taxon>
        <taxon>Catarrhini</taxon>
        <taxon>Hominidae</taxon>
        <taxon>Homo</taxon>
    </lineage>
</organism>
<accession>Q6ZTR7</accession>
<accession>A0A0D9SG36</accession>